<protein>
    <recommendedName>
        <fullName evidence="3">ATP-dependent 6-phosphofructokinase 4, chloroplastic</fullName>
        <shortName evidence="3">ATP-PFK 4</shortName>
        <shortName evidence="3">Phosphofructokinase 4</shortName>
        <ecNumber evidence="3">2.7.1.11</ecNumber>
    </recommendedName>
    <alternativeName>
        <fullName evidence="3">Phosphohexokinase 4</fullName>
    </alternativeName>
</protein>
<keyword id="KW-0021">Allosteric enzyme</keyword>
<keyword id="KW-0025">Alternative splicing</keyword>
<keyword id="KW-0067">ATP-binding</keyword>
<keyword id="KW-0150">Chloroplast</keyword>
<keyword id="KW-0324">Glycolysis</keyword>
<keyword id="KW-0418">Kinase</keyword>
<keyword id="KW-0460">Magnesium</keyword>
<keyword id="KW-0479">Metal-binding</keyword>
<keyword id="KW-0547">Nucleotide-binding</keyword>
<keyword id="KW-0597">Phosphoprotein</keyword>
<keyword id="KW-0934">Plastid</keyword>
<keyword id="KW-1185">Reference proteome</keyword>
<keyword id="KW-0808">Transferase</keyword>
<keyword id="KW-0809">Transit peptide</keyword>
<gene>
    <name evidence="3" type="primary">PFK4</name>
    <name type="ordered locus">At5g61580</name>
    <name type="ORF">K11J9.3</name>
</gene>
<proteinExistence type="evidence at protein level"/>
<reference key="1">
    <citation type="journal article" date="1998" name="DNA Res.">
        <title>Structural analysis of Arabidopsis thaliana chromosome 5. VI. Sequence features of the regions of 1,367,185 bp covered by 19 physically assigned P1 and TAC clones.</title>
        <authorList>
            <person name="Kotani H."/>
            <person name="Nakamura Y."/>
            <person name="Sato S."/>
            <person name="Asamizu E."/>
            <person name="Kaneko T."/>
            <person name="Miyajima N."/>
            <person name="Tabata S."/>
        </authorList>
    </citation>
    <scope>NUCLEOTIDE SEQUENCE [LARGE SCALE GENOMIC DNA]</scope>
    <source>
        <strain>cv. Columbia</strain>
    </source>
</reference>
<reference key="2">
    <citation type="journal article" date="2017" name="Plant J.">
        <title>Araport11: a complete reannotation of the Arabidopsis thaliana reference genome.</title>
        <authorList>
            <person name="Cheng C.Y."/>
            <person name="Krishnakumar V."/>
            <person name="Chan A.P."/>
            <person name="Thibaud-Nissen F."/>
            <person name="Schobel S."/>
            <person name="Town C.D."/>
        </authorList>
    </citation>
    <scope>GENOME REANNOTATION</scope>
    <source>
        <strain>cv. Columbia</strain>
    </source>
</reference>
<reference key="3">
    <citation type="journal article" date="2003" name="Science">
        <title>Empirical analysis of transcriptional activity in the Arabidopsis genome.</title>
        <authorList>
            <person name="Yamada K."/>
            <person name="Lim J."/>
            <person name="Dale J.M."/>
            <person name="Chen H."/>
            <person name="Shinn P."/>
            <person name="Palm C.J."/>
            <person name="Southwick A.M."/>
            <person name="Wu H.C."/>
            <person name="Kim C.J."/>
            <person name="Nguyen M."/>
            <person name="Pham P.K."/>
            <person name="Cheuk R.F."/>
            <person name="Karlin-Newmann G."/>
            <person name="Liu S.X."/>
            <person name="Lam B."/>
            <person name="Sakano H."/>
            <person name="Wu T."/>
            <person name="Yu G."/>
            <person name="Miranda M."/>
            <person name="Quach H.L."/>
            <person name="Tripp M."/>
            <person name="Chang C.H."/>
            <person name="Lee J.M."/>
            <person name="Toriumi M.J."/>
            <person name="Chan M.M."/>
            <person name="Tang C.C."/>
            <person name="Onodera C.S."/>
            <person name="Deng J.M."/>
            <person name="Akiyama K."/>
            <person name="Ansari Y."/>
            <person name="Arakawa T."/>
            <person name="Banh J."/>
            <person name="Banno F."/>
            <person name="Bowser L."/>
            <person name="Brooks S.Y."/>
            <person name="Carninci P."/>
            <person name="Chao Q."/>
            <person name="Choy N."/>
            <person name="Enju A."/>
            <person name="Goldsmith A.D."/>
            <person name="Gurjal M."/>
            <person name="Hansen N.F."/>
            <person name="Hayashizaki Y."/>
            <person name="Johnson-Hopson C."/>
            <person name="Hsuan V.W."/>
            <person name="Iida K."/>
            <person name="Karnes M."/>
            <person name="Khan S."/>
            <person name="Koesema E."/>
            <person name="Ishida J."/>
            <person name="Jiang P.X."/>
            <person name="Jones T."/>
            <person name="Kawai J."/>
            <person name="Kamiya A."/>
            <person name="Meyers C."/>
            <person name="Nakajima M."/>
            <person name="Narusaka M."/>
            <person name="Seki M."/>
            <person name="Sakurai T."/>
            <person name="Satou M."/>
            <person name="Tamse R."/>
            <person name="Vaysberg M."/>
            <person name="Wallender E.K."/>
            <person name="Wong C."/>
            <person name="Yamamura Y."/>
            <person name="Yuan S."/>
            <person name="Shinozaki K."/>
            <person name="Davis R.W."/>
            <person name="Theologis A."/>
            <person name="Ecker J.R."/>
        </authorList>
    </citation>
    <scope>NUCLEOTIDE SEQUENCE [LARGE SCALE MRNA] (ISOFORM 1)</scope>
    <source>
        <strain>cv. Columbia</strain>
    </source>
</reference>
<reference key="4">
    <citation type="journal article" date="2007" name="FEBS Lett.">
        <title>Characterisation of the ATP-dependent phosphofructokinase gene family from Arabidopsis thaliana.</title>
        <authorList>
            <person name="Mustroph A."/>
            <person name="Sonnewald U."/>
            <person name="Biemelt S."/>
        </authorList>
    </citation>
    <scope>CATALYTIC ACTIVITY</scope>
    <scope>TISSUE SPECIFICITY</scope>
    <scope>SUBCELLULAR LOCATION</scope>
    <scope>GENE FAMILY</scope>
    <scope>NOMENCLATURE</scope>
</reference>
<dbReference type="EC" id="2.7.1.11" evidence="3"/>
<dbReference type="EMBL" id="AB012239">
    <property type="protein sequence ID" value="BAB09002.1"/>
    <property type="molecule type" value="Genomic_DNA"/>
</dbReference>
<dbReference type="EMBL" id="CP002688">
    <property type="protein sequence ID" value="AED97492.1"/>
    <property type="molecule type" value="Genomic_DNA"/>
</dbReference>
<dbReference type="EMBL" id="CP002688">
    <property type="protein sequence ID" value="AED97493.1"/>
    <property type="molecule type" value="Genomic_DNA"/>
</dbReference>
<dbReference type="EMBL" id="AY099694">
    <property type="protein sequence ID" value="AAM20545.1"/>
    <property type="molecule type" value="mRNA"/>
</dbReference>
<dbReference type="EMBL" id="AY128873">
    <property type="protein sequence ID" value="AAM91273.1"/>
    <property type="molecule type" value="mRNA"/>
</dbReference>
<dbReference type="RefSeq" id="NP_001032120.1">
    <molecule id="Q9FKG3-2"/>
    <property type="nucleotide sequence ID" value="NM_001037043.1"/>
</dbReference>
<dbReference type="RefSeq" id="NP_200966.2">
    <molecule id="Q9FKG3-1"/>
    <property type="nucleotide sequence ID" value="NM_125551.4"/>
</dbReference>
<dbReference type="SMR" id="Q9FKG3"/>
<dbReference type="BioGRID" id="21523">
    <property type="interactions" value="1"/>
</dbReference>
<dbReference type="FunCoup" id="Q9FKG3">
    <property type="interactions" value="713"/>
</dbReference>
<dbReference type="STRING" id="3702.Q9FKG3"/>
<dbReference type="PaxDb" id="3702-AT5G61580.1"/>
<dbReference type="ProteomicsDB" id="236671">
    <molecule id="Q9FKG3-1"/>
</dbReference>
<dbReference type="EnsemblPlants" id="AT5G61580.1">
    <molecule id="Q9FKG3-1"/>
    <property type="protein sequence ID" value="AT5G61580.1"/>
    <property type="gene ID" value="AT5G61580"/>
</dbReference>
<dbReference type="EnsemblPlants" id="AT5G61580.2">
    <molecule id="Q9FKG3-2"/>
    <property type="protein sequence ID" value="AT5G61580.2"/>
    <property type="gene ID" value="AT5G61580"/>
</dbReference>
<dbReference type="GeneID" id="836279"/>
<dbReference type="Gramene" id="AT5G61580.1">
    <molecule id="Q9FKG3-1"/>
    <property type="protein sequence ID" value="AT5G61580.1"/>
    <property type="gene ID" value="AT5G61580"/>
</dbReference>
<dbReference type="Gramene" id="AT5G61580.2">
    <molecule id="Q9FKG3-2"/>
    <property type="protein sequence ID" value="AT5G61580.2"/>
    <property type="gene ID" value="AT5G61580"/>
</dbReference>
<dbReference type="KEGG" id="ath:AT5G61580"/>
<dbReference type="Araport" id="AT5G61580"/>
<dbReference type="TAIR" id="AT5G61580">
    <property type="gene designation" value="PFK4"/>
</dbReference>
<dbReference type="eggNOG" id="KOG2440">
    <property type="taxonomic scope" value="Eukaryota"/>
</dbReference>
<dbReference type="InParanoid" id="Q9FKG3"/>
<dbReference type="OMA" id="ERMGINM"/>
<dbReference type="PhylomeDB" id="Q9FKG3"/>
<dbReference type="BioCyc" id="ARA:AT5G61580-MONOMER"/>
<dbReference type="BRENDA" id="2.7.1.11">
    <property type="organism ID" value="399"/>
</dbReference>
<dbReference type="UniPathway" id="UPA00109">
    <property type="reaction ID" value="UER00182"/>
</dbReference>
<dbReference type="PRO" id="PR:Q9FKG3"/>
<dbReference type="Proteomes" id="UP000006548">
    <property type="component" value="Chromosome 5"/>
</dbReference>
<dbReference type="ExpressionAtlas" id="Q9FKG3">
    <property type="expression patterns" value="baseline and differential"/>
</dbReference>
<dbReference type="GO" id="GO:0009507">
    <property type="term" value="C:chloroplast"/>
    <property type="evidence" value="ECO:0000314"/>
    <property type="project" value="TAIR"/>
</dbReference>
<dbReference type="GO" id="GO:0003872">
    <property type="term" value="F:6-phosphofructokinase activity"/>
    <property type="evidence" value="ECO:0000314"/>
    <property type="project" value="TAIR"/>
</dbReference>
<dbReference type="GO" id="GO:0005524">
    <property type="term" value="F:ATP binding"/>
    <property type="evidence" value="ECO:0007669"/>
    <property type="project" value="UniProtKB-KW"/>
</dbReference>
<dbReference type="GO" id="GO:0046872">
    <property type="term" value="F:metal ion binding"/>
    <property type="evidence" value="ECO:0007669"/>
    <property type="project" value="UniProtKB-KW"/>
</dbReference>
<dbReference type="GO" id="GO:0006002">
    <property type="term" value="P:fructose 6-phosphate metabolic process"/>
    <property type="evidence" value="ECO:0007669"/>
    <property type="project" value="InterPro"/>
</dbReference>
<dbReference type="GO" id="GO:0006096">
    <property type="term" value="P:glycolytic process"/>
    <property type="evidence" value="ECO:0000314"/>
    <property type="project" value="TAIR"/>
</dbReference>
<dbReference type="FunFam" id="3.40.50.450:FF:000002">
    <property type="entry name" value="ATP-dependent 6-phosphofructokinase"/>
    <property type="match status" value="1"/>
</dbReference>
<dbReference type="Gene3D" id="3.40.50.450">
    <property type="match status" value="1"/>
</dbReference>
<dbReference type="HAMAP" id="MF_01981">
    <property type="entry name" value="Phosphofructokinase_II_X"/>
    <property type="match status" value="1"/>
</dbReference>
<dbReference type="InterPro" id="IPR022953">
    <property type="entry name" value="ATP_PFK"/>
</dbReference>
<dbReference type="InterPro" id="IPR050929">
    <property type="entry name" value="PFKA"/>
</dbReference>
<dbReference type="InterPro" id="IPR000023">
    <property type="entry name" value="Phosphofructokinase_dom"/>
</dbReference>
<dbReference type="InterPro" id="IPR035966">
    <property type="entry name" value="PKF_sf"/>
</dbReference>
<dbReference type="InterPro" id="IPR012004">
    <property type="entry name" value="PyroP-dep_PFK_TP0108"/>
</dbReference>
<dbReference type="NCBIfam" id="NF005301">
    <property type="entry name" value="PRK06830.1"/>
    <property type="match status" value="1"/>
</dbReference>
<dbReference type="PANTHER" id="PTHR45770">
    <property type="entry name" value="ATP-DEPENDENT 6-PHOSPHOFRUCTOKINASE 1"/>
    <property type="match status" value="1"/>
</dbReference>
<dbReference type="Pfam" id="PF00365">
    <property type="entry name" value="PFK"/>
    <property type="match status" value="1"/>
</dbReference>
<dbReference type="PRINTS" id="PR00476">
    <property type="entry name" value="PHFRCTKINASE"/>
</dbReference>
<dbReference type="SUPFAM" id="SSF53784">
    <property type="entry name" value="Phosphofructokinase"/>
    <property type="match status" value="1"/>
</dbReference>
<evidence type="ECO:0000250" key="1">
    <source>
        <dbReference type="UniProtKB" id="Q9M0F9"/>
    </source>
</evidence>
<evidence type="ECO:0000255" key="2"/>
<evidence type="ECO:0000255" key="3">
    <source>
        <dbReference type="HAMAP-Rule" id="MF_03186"/>
    </source>
</evidence>
<evidence type="ECO:0000269" key="4">
    <source>
    </source>
</evidence>
<evidence type="ECO:0000305" key="5"/>
<comment type="function">
    <text evidence="3">Catalyzes the phosphorylation of D-fructose 6-phosphate to fructose 1,6-bisphosphate by ATP, the first committing step of glycolysis.</text>
</comment>
<comment type="catalytic activity">
    <reaction evidence="3 4">
        <text>beta-D-fructose 6-phosphate + ATP = beta-D-fructose 1,6-bisphosphate + ADP + H(+)</text>
        <dbReference type="Rhea" id="RHEA:16109"/>
        <dbReference type="ChEBI" id="CHEBI:15378"/>
        <dbReference type="ChEBI" id="CHEBI:30616"/>
        <dbReference type="ChEBI" id="CHEBI:32966"/>
        <dbReference type="ChEBI" id="CHEBI:57634"/>
        <dbReference type="ChEBI" id="CHEBI:456216"/>
        <dbReference type="EC" id="2.7.1.11"/>
    </reaction>
</comment>
<comment type="cofactor">
    <cofactor evidence="3">
        <name>Mg(2+)</name>
        <dbReference type="ChEBI" id="CHEBI:18420"/>
    </cofactor>
</comment>
<comment type="activity regulation">
    <text evidence="3">Allosterically activated by AMP.</text>
</comment>
<comment type="pathway">
    <text evidence="3">Carbohydrate degradation; glycolysis; D-glyceraldehyde 3-phosphate and glycerone phosphate from D-glucose: step 3/4.</text>
</comment>
<comment type="subunit">
    <text evidence="3">Homotetramer.</text>
</comment>
<comment type="subcellular location">
    <subcellularLocation>
        <location evidence="4">Plastid</location>
        <location evidence="4">Chloroplast</location>
    </subcellularLocation>
</comment>
<comment type="alternative products">
    <event type="alternative splicing"/>
    <isoform>
        <id>Q9FKG3-1</id>
        <name>1</name>
        <sequence type="displayed"/>
    </isoform>
    <isoform>
        <id>Q9FKG3-2</id>
        <name>2</name>
        <sequence type="described" ref="VSP_033114"/>
    </isoform>
</comment>
<comment type="tissue specificity">
    <text evidence="4">Expressed in leaves, stems and flowers.</text>
</comment>
<comment type="similarity">
    <text evidence="3">Belongs to the phosphofructokinase type A (PFKA) family. PPi-dependent PFK group II subfamily. Atypical ATP-dependent clade 'X' sub-subfamily.</text>
</comment>
<feature type="transit peptide" description="Chloroplast" evidence="2">
    <location>
        <begin position="1"/>
        <end position="54"/>
    </location>
</feature>
<feature type="chain" id="PRO_0000330771" description="ATP-dependent 6-phosphofructokinase 4, chloroplastic">
    <location>
        <begin position="55"/>
        <end position="530"/>
    </location>
</feature>
<feature type="active site" description="Proton acceptor" evidence="3">
    <location>
        <position position="271"/>
    </location>
</feature>
<feature type="binding site" evidence="3">
    <location>
        <position position="152"/>
    </location>
    <ligand>
        <name>ATP</name>
        <dbReference type="ChEBI" id="CHEBI:30616"/>
    </ligand>
</feature>
<feature type="binding site" evidence="3">
    <location>
        <begin position="215"/>
        <end position="216"/>
    </location>
    <ligand>
        <name>ATP</name>
        <dbReference type="ChEBI" id="CHEBI:30616"/>
    </ligand>
</feature>
<feature type="binding site" evidence="3">
    <location>
        <begin position="240"/>
        <end position="243"/>
    </location>
    <ligand>
        <name>ATP</name>
        <dbReference type="ChEBI" id="CHEBI:30616"/>
    </ligand>
</feature>
<feature type="binding site" evidence="3">
    <location>
        <begin position="269"/>
        <end position="271"/>
    </location>
    <ligand>
        <name>substrate</name>
    </ligand>
</feature>
<feature type="binding site" evidence="3">
    <location>
        <begin position="314"/>
        <end position="316"/>
    </location>
    <ligand>
        <name>substrate</name>
    </ligand>
</feature>
<feature type="binding site" evidence="3">
    <location>
        <position position="370"/>
    </location>
    <ligand>
        <name>substrate</name>
    </ligand>
</feature>
<feature type="binding site" evidence="3">
    <location>
        <begin position="427"/>
        <end position="430"/>
    </location>
    <ligand>
        <name>substrate</name>
    </ligand>
</feature>
<feature type="site" description="Important for substrate specificity; cannot use PPi as phosphoryl donor" evidence="3">
    <location>
        <position position="242"/>
    </location>
</feature>
<feature type="modified residue" description="Phosphoserine" evidence="1">
    <location>
        <position position="121"/>
    </location>
</feature>
<feature type="splice variant" id="VSP_033114" description="In isoform 2." evidence="5">
    <location>
        <position position="476"/>
    </location>
</feature>
<accession>Q9FKG3</accession>
<accession>Q2V2W5</accession>
<sequence length="530" mass="58467">MEASISFLGSTKPNISLFNPSSNVLPRRDFPLPALKLKKVSVLPRILHQKRLIRAQCSDGFKPEEDDGFVLEDVPHLTKFLPDLPSYPNPLKESQAYAIVKRTFVSSEDVVAQNIVVQKGSKRGVHFRRAGPRERVYFRSDEVKACIVTCGGLCPGINTVIREIVCGLNNMYGVNNILGIQGGYRGFYSKNTMNLTPKVVNDIHKRGGTFLQTSRGGHDTAKIVDNIQDRGINQVYIIGGGGTQKGAEKIYEEVERRGLQVAVSGIPKTIDNDIAVIDKSFGFDTAVEEAQRAINAAHVEVESVENGVGIVKLMGRYSGFIAMIATLANRDVDCCLIPESPFFLEGKGGLFEFIEERLKENRHMVIVIAEGAGQDYVAQSMRASETKDASGNRLLLDVGLWLTQQIKDHFTNVRKMMINMKYIDPTYMIRAIPSNASDNVYCTLLAQSAVHGAMAGYSGFTVGPVNSRHAYIPISQVTEVTNTVKLTDRMWARLLASTNQPSFLTGEGALQNVIDMETQEKIDNMKISSI</sequence>
<name>PFKA4_ARATH</name>
<organism>
    <name type="scientific">Arabidopsis thaliana</name>
    <name type="common">Mouse-ear cress</name>
    <dbReference type="NCBI Taxonomy" id="3702"/>
    <lineage>
        <taxon>Eukaryota</taxon>
        <taxon>Viridiplantae</taxon>
        <taxon>Streptophyta</taxon>
        <taxon>Embryophyta</taxon>
        <taxon>Tracheophyta</taxon>
        <taxon>Spermatophyta</taxon>
        <taxon>Magnoliopsida</taxon>
        <taxon>eudicotyledons</taxon>
        <taxon>Gunneridae</taxon>
        <taxon>Pentapetalae</taxon>
        <taxon>rosids</taxon>
        <taxon>malvids</taxon>
        <taxon>Brassicales</taxon>
        <taxon>Brassicaceae</taxon>
        <taxon>Camelineae</taxon>
        <taxon>Arabidopsis</taxon>
    </lineage>
</organism>